<name>RNG_HAEIN</name>
<sequence>MDAVELLMNVTPNETRIALVETGMLREVHIERQAKRGIVGNIYKGRVTRVLPGMQSAFVDIGLEKAAFLHAADIVSHTECVDENEQKQFKVKSISELVREGQDIVVQVVKEPLGTKGARLTTDITLPSRHLVFMPENSHVGVSQRIESEEERARLKALVEPFCDELGGFIIRTATEGASEEELRQDAEFLKRLWRKVLERKSKYPTKSKIYGEPALPQRILRDFIGTNLEKIRIDSKLCFGEVKEFTDEFMPELSDKLVLYSGNQPIFDVYGVENAIQTALDKRVNLKSGGYLIIEQTEAMTTIDINTGAFVGHRNLEETIFNTNIEATKAIAHELQLRNLGGIIIIDFIDMQTDEHRNRVLQSLCDALSKDRMKTNVNGFTQLGLVEMTRKRTRESLEHVLCDECPTCHGRGRVKTVETVCYEIMREIIRVYHLFSSEQFVVYASPAVSEYLINEESHGLLPEVEMFIGKRVKVKTEQFYNQEQFDVVVM</sequence>
<keyword id="KW-0131">Cell cycle</keyword>
<keyword id="KW-0132">Cell division</keyword>
<keyword id="KW-0963">Cytoplasm</keyword>
<keyword id="KW-0255">Endonuclease</keyword>
<keyword id="KW-0378">Hydrolase</keyword>
<keyword id="KW-0460">Magnesium</keyword>
<keyword id="KW-0479">Metal-binding</keyword>
<keyword id="KW-0540">Nuclease</keyword>
<keyword id="KW-1185">Reference proteome</keyword>
<keyword id="KW-0694">RNA-binding</keyword>
<keyword id="KW-0698">rRNA processing</keyword>
<keyword id="KW-0699">rRNA-binding</keyword>
<keyword id="KW-0819">tRNA processing</keyword>
<keyword id="KW-0820">tRNA-binding</keyword>
<protein>
    <recommendedName>
        <fullName>Ribonuclease G</fullName>
        <shortName>RNase G</shortName>
        <ecNumber>3.1.26.-</ecNumber>
    </recommendedName>
</protein>
<dbReference type="EC" id="3.1.26.-"/>
<dbReference type="EMBL" id="L42023">
    <property type="protein sequence ID" value="AAC23000.1"/>
    <property type="molecule type" value="Genomic_DNA"/>
</dbReference>
<dbReference type="PIR" id="F64118">
    <property type="entry name" value="F64118"/>
</dbReference>
<dbReference type="RefSeq" id="NP_439504.1">
    <property type="nucleotide sequence ID" value="NC_000907.1"/>
</dbReference>
<dbReference type="SMR" id="P45175"/>
<dbReference type="STRING" id="71421.HI_1353"/>
<dbReference type="EnsemblBacteria" id="AAC23000">
    <property type="protein sequence ID" value="AAC23000"/>
    <property type="gene ID" value="HI_1353"/>
</dbReference>
<dbReference type="KEGG" id="hin:HI_1353"/>
<dbReference type="PATRIC" id="fig|71421.8.peg.1406"/>
<dbReference type="eggNOG" id="COG1530">
    <property type="taxonomic scope" value="Bacteria"/>
</dbReference>
<dbReference type="HOGENOM" id="CLU_003468_5_3_6"/>
<dbReference type="OrthoDB" id="9804278at2"/>
<dbReference type="PhylomeDB" id="P45175"/>
<dbReference type="BioCyc" id="HINF71421:G1GJ1-1378-MONOMER"/>
<dbReference type="Proteomes" id="UP000000579">
    <property type="component" value="Chromosome"/>
</dbReference>
<dbReference type="GO" id="GO:0005737">
    <property type="term" value="C:cytoplasm"/>
    <property type="evidence" value="ECO:0000318"/>
    <property type="project" value="GO_Central"/>
</dbReference>
<dbReference type="GO" id="GO:0004519">
    <property type="term" value="F:endonuclease activity"/>
    <property type="evidence" value="ECO:0007669"/>
    <property type="project" value="UniProtKB-KW"/>
</dbReference>
<dbReference type="GO" id="GO:0046872">
    <property type="term" value="F:metal ion binding"/>
    <property type="evidence" value="ECO:0007669"/>
    <property type="project" value="UniProtKB-KW"/>
</dbReference>
<dbReference type="GO" id="GO:0004540">
    <property type="term" value="F:RNA nuclease activity"/>
    <property type="evidence" value="ECO:0000318"/>
    <property type="project" value="GO_Central"/>
</dbReference>
<dbReference type="GO" id="GO:0019843">
    <property type="term" value="F:rRNA binding"/>
    <property type="evidence" value="ECO:0007669"/>
    <property type="project" value="UniProtKB-KW"/>
</dbReference>
<dbReference type="GO" id="GO:0000049">
    <property type="term" value="F:tRNA binding"/>
    <property type="evidence" value="ECO:0007669"/>
    <property type="project" value="UniProtKB-KW"/>
</dbReference>
<dbReference type="GO" id="GO:0051301">
    <property type="term" value="P:cell division"/>
    <property type="evidence" value="ECO:0007669"/>
    <property type="project" value="UniProtKB-KW"/>
</dbReference>
<dbReference type="GO" id="GO:0006364">
    <property type="term" value="P:rRNA processing"/>
    <property type="evidence" value="ECO:0000318"/>
    <property type="project" value="GO_Central"/>
</dbReference>
<dbReference type="GO" id="GO:0008033">
    <property type="term" value="P:tRNA processing"/>
    <property type="evidence" value="ECO:0007669"/>
    <property type="project" value="UniProtKB-KW"/>
</dbReference>
<dbReference type="CDD" id="cd04453">
    <property type="entry name" value="S1_RNase_E"/>
    <property type="match status" value="1"/>
</dbReference>
<dbReference type="FunFam" id="2.40.50.140:FF:000028">
    <property type="entry name" value="Ribonuclease G"/>
    <property type="match status" value="1"/>
</dbReference>
<dbReference type="FunFam" id="3.40.1260.20:FF:000001">
    <property type="entry name" value="Ribonuclease G Rng"/>
    <property type="match status" value="1"/>
</dbReference>
<dbReference type="Gene3D" id="2.40.50.140">
    <property type="entry name" value="Nucleic acid-binding proteins"/>
    <property type="match status" value="1"/>
</dbReference>
<dbReference type="Gene3D" id="3.40.1260.20">
    <property type="entry name" value="Ribonuclease E, catalytic domain"/>
    <property type="match status" value="1"/>
</dbReference>
<dbReference type="InterPro" id="IPR012340">
    <property type="entry name" value="NA-bd_OB-fold"/>
</dbReference>
<dbReference type="InterPro" id="IPR019307">
    <property type="entry name" value="RNA-bd_AU-1/RNase_E/G"/>
</dbReference>
<dbReference type="InterPro" id="IPR004659">
    <property type="entry name" value="RNase_E/G"/>
</dbReference>
<dbReference type="InterPro" id="IPR048583">
    <property type="entry name" value="RNase_E_G_thioredoxin-like"/>
</dbReference>
<dbReference type="InterPro" id="IPR003029">
    <property type="entry name" value="S1_domain"/>
</dbReference>
<dbReference type="NCBIfam" id="NF008689">
    <property type="entry name" value="PRK11712.1"/>
    <property type="match status" value="1"/>
</dbReference>
<dbReference type="NCBIfam" id="TIGR00757">
    <property type="entry name" value="RNaseEG"/>
    <property type="match status" value="1"/>
</dbReference>
<dbReference type="PANTHER" id="PTHR30001">
    <property type="entry name" value="RIBONUCLEASE"/>
    <property type="match status" value="1"/>
</dbReference>
<dbReference type="PANTHER" id="PTHR30001:SF0">
    <property type="entry name" value="RIBONUCLEASE G"/>
    <property type="match status" value="1"/>
</dbReference>
<dbReference type="Pfam" id="PF10150">
    <property type="entry name" value="RNase_E_G"/>
    <property type="match status" value="1"/>
</dbReference>
<dbReference type="Pfam" id="PF20833">
    <property type="entry name" value="RNase_E_G_Thio"/>
    <property type="match status" value="1"/>
</dbReference>
<dbReference type="Pfam" id="PF00575">
    <property type="entry name" value="S1"/>
    <property type="match status" value="1"/>
</dbReference>
<dbReference type="SMART" id="SM00316">
    <property type="entry name" value="S1"/>
    <property type="match status" value="1"/>
</dbReference>
<dbReference type="SUPFAM" id="SSF50249">
    <property type="entry name" value="Nucleic acid-binding proteins"/>
    <property type="match status" value="1"/>
</dbReference>
<dbReference type="PROSITE" id="PS50126">
    <property type="entry name" value="S1"/>
    <property type="match status" value="1"/>
</dbReference>
<accession>P45175</accession>
<evidence type="ECO:0000250" key="1">
    <source>
        <dbReference type="UniProtKB" id="P0A9J0"/>
    </source>
</evidence>
<evidence type="ECO:0000250" key="2">
    <source>
        <dbReference type="UniProtKB" id="P21513"/>
    </source>
</evidence>
<evidence type="ECO:0000255" key="3">
    <source>
        <dbReference type="PROSITE-ProRule" id="PRU00180"/>
    </source>
</evidence>
<evidence type="ECO:0000305" key="4"/>
<feature type="chain" id="PRO_0000097384" description="Ribonuclease G">
    <location>
        <begin position="1"/>
        <end position="491"/>
    </location>
</feature>
<feature type="domain" description="S1 motif" evidence="3">
    <location>
        <begin position="40"/>
        <end position="129"/>
    </location>
</feature>
<feature type="binding site" evidence="2">
    <location>
        <position position="305"/>
    </location>
    <ligand>
        <name>Mg(2+)</name>
        <dbReference type="ChEBI" id="CHEBI:18420"/>
        <note>catalytic</note>
    </ligand>
</feature>
<feature type="binding site" evidence="2">
    <location>
        <position position="348"/>
    </location>
    <ligand>
        <name>Mg(2+)</name>
        <dbReference type="ChEBI" id="CHEBI:18420"/>
        <note>catalytic</note>
    </ligand>
</feature>
<organism>
    <name type="scientific">Haemophilus influenzae (strain ATCC 51907 / DSM 11121 / KW20 / Rd)</name>
    <dbReference type="NCBI Taxonomy" id="71421"/>
    <lineage>
        <taxon>Bacteria</taxon>
        <taxon>Pseudomonadati</taxon>
        <taxon>Pseudomonadota</taxon>
        <taxon>Gammaproteobacteria</taxon>
        <taxon>Pasteurellales</taxon>
        <taxon>Pasteurellaceae</taxon>
        <taxon>Haemophilus</taxon>
    </lineage>
</organism>
<proteinExistence type="inferred from homology"/>
<comment type="function">
    <text evidence="1">An endonuclease that acts in the processing of the 5'-end of 16S rRNA and 23S rRNA. It prefers 5'-monophosphorylated substrates and cleaves single-stranded sites rich in A and U residues; contributes to tRNA processing and mRNA turnover.</text>
</comment>
<comment type="cofactor">
    <cofactor evidence="2">
        <name>Mg(2+)</name>
        <dbReference type="ChEBI" id="CHEBI:18420"/>
    </cofactor>
    <text evidence="2">Binds 1 Mg(2+) ion per subunit.</text>
</comment>
<comment type="subunit">
    <text evidence="1">Homodimer, in equilibrium with possible higher multimers.</text>
</comment>
<comment type="subcellular location">
    <subcellularLocation>
        <location evidence="1">Cytoplasm</location>
    </subcellularLocation>
</comment>
<comment type="similarity">
    <text evidence="4">Belongs to the RNase E/G family. RNase G subfamily.</text>
</comment>
<reference key="1">
    <citation type="journal article" date="1995" name="Science">
        <title>Whole-genome random sequencing and assembly of Haemophilus influenzae Rd.</title>
        <authorList>
            <person name="Fleischmann R.D."/>
            <person name="Adams M.D."/>
            <person name="White O."/>
            <person name="Clayton R.A."/>
            <person name="Kirkness E.F."/>
            <person name="Kerlavage A.R."/>
            <person name="Bult C.J."/>
            <person name="Tomb J.-F."/>
            <person name="Dougherty B.A."/>
            <person name="Merrick J.M."/>
            <person name="McKenney K."/>
            <person name="Sutton G.G."/>
            <person name="FitzHugh W."/>
            <person name="Fields C.A."/>
            <person name="Gocayne J.D."/>
            <person name="Scott J.D."/>
            <person name="Shirley R."/>
            <person name="Liu L.-I."/>
            <person name="Glodek A."/>
            <person name="Kelley J.M."/>
            <person name="Weidman J.F."/>
            <person name="Phillips C.A."/>
            <person name="Spriggs T."/>
            <person name="Hedblom E."/>
            <person name="Cotton M.D."/>
            <person name="Utterback T.R."/>
            <person name="Hanna M.C."/>
            <person name="Nguyen D.T."/>
            <person name="Saudek D.M."/>
            <person name="Brandon R.C."/>
            <person name="Fine L.D."/>
            <person name="Fritchman J.L."/>
            <person name="Fuhrmann J.L."/>
            <person name="Geoghagen N.S.M."/>
            <person name="Gnehm C.L."/>
            <person name="McDonald L.A."/>
            <person name="Small K.V."/>
            <person name="Fraser C.M."/>
            <person name="Smith H.O."/>
            <person name="Venter J.C."/>
        </authorList>
    </citation>
    <scope>NUCLEOTIDE SEQUENCE [LARGE SCALE GENOMIC DNA]</scope>
    <source>
        <strain>ATCC 51907 / DSM 11121 / KW20 / Rd</strain>
    </source>
</reference>
<gene>
    <name type="primary">rng</name>
    <name type="ordered locus">HI_1353</name>
</gene>